<feature type="chain" id="PRO_0000321172" description="Aspartate carbamoyltransferase catalytic subunit">
    <location>
        <begin position="1"/>
        <end position="326"/>
    </location>
</feature>
<feature type="binding site" evidence="1">
    <location>
        <position position="58"/>
    </location>
    <ligand>
        <name>carbamoyl phosphate</name>
        <dbReference type="ChEBI" id="CHEBI:58228"/>
    </ligand>
</feature>
<feature type="binding site" evidence="1">
    <location>
        <position position="59"/>
    </location>
    <ligand>
        <name>carbamoyl phosphate</name>
        <dbReference type="ChEBI" id="CHEBI:58228"/>
    </ligand>
</feature>
<feature type="binding site" evidence="1">
    <location>
        <position position="86"/>
    </location>
    <ligand>
        <name>L-aspartate</name>
        <dbReference type="ChEBI" id="CHEBI:29991"/>
    </ligand>
</feature>
<feature type="binding site" evidence="1">
    <location>
        <position position="108"/>
    </location>
    <ligand>
        <name>carbamoyl phosphate</name>
        <dbReference type="ChEBI" id="CHEBI:58228"/>
    </ligand>
</feature>
<feature type="binding site" evidence="1">
    <location>
        <position position="141"/>
    </location>
    <ligand>
        <name>carbamoyl phosphate</name>
        <dbReference type="ChEBI" id="CHEBI:58228"/>
    </ligand>
</feature>
<feature type="binding site" evidence="1">
    <location>
        <position position="144"/>
    </location>
    <ligand>
        <name>carbamoyl phosphate</name>
        <dbReference type="ChEBI" id="CHEBI:58228"/>
    </ligand>
</feature>
<feature type="binding site" evidence="1">
    <location>
        <position position="181"/>
    </location>
    <ligand>
        <name>L-aspartate</name>
        <dbReference type="ChEBI" id="CHEBI:29991"/>
    </ligand>
</feature>
<feature type="binding site" evidence="1">
    <location>
        <position position="239"/>
    </location>
    <ligand>
        <name>L-aspartate</name>
        <dbReference type="ChEBI" id="CHEBI:29991"/>
    </ligand>
</feature>
<feature type="binding site" evidence="1">
    <location>
        <position position="280"/>
    </location>
    <ligand>
        <name>carbamoyl phosphate</name>
        <dbReference type="ChEBI" id="CHEBI:58228"/>
    </ligand>
</feature>
<feature type="binding site" evidence="1">
    <location>
        <position position="281"/>
    </location>
    <ligand>
        <name>carbamoyl phosphate</name>
        <dbReference type="ChEBI" id="CHEBI:58228"/>
    </ligand>
</feature>
<keyword id="KW-0665">Pyrimidine biosynthesis</keyword>
<keyword id="KW-0808">Transferase</keyword>
<sequence length="326" mass="36007">MVWQRQHVLGLADFTPEEYQMVLQTSASFQEVLTRRLPKVPTLQGKVVVTLFFEPSTRTRSSFELAAKRLSADVLNFSPGTSSLSKGETLLDTARTFLAMGSDLLIVRHAQAGVPQQLAAEIDRRGSPVGVLNAGDGLHEHPTQGLLDLFTLCSHLDPRRPRLELLQGIKIAIVGDILHSRVARSDIYALVAAGAEVHLAGPPTLLPKDFAHFVPGHTLPVHWQLEPALEGARFVITLRLQQERMGEFLLPSLQEYHHFFGLTRQRLRLCHPDVKLLHPGPVNRGVELSSEVMEDPGLNLIEQQVTHGVAVRMALLYLMGGGRIPA</sequence>
<accession>Q2JTU8</accession>
<organism>
    <name type="scientific">Synechococcus sp. (strain JA-3-3Ab)</name>
    <name type="common">Cyanobacteria bacterium Yellowstone A-Prime</name>
    <dbReference type="NCBI Taxonomy" id="321327"/>
    <lineage>
        <taxon>Bacteria</taxon>
        <taxon>Bacillati</taxon>
        <taxon>Cyanobacteriota</taxon>
        <taxon>Cyanophyceae</taxon>
        <taxon>Synechococcales</taxon>
        <taxon>Synechococcaceae</taxon>
        <taxon>Synechococcus</taxon>
    </lineage>
</organism>
<gene>
    <name evidence="1" type="primary">pyrB</name>
    <name type="ordered locus">CYA_1730</name>
</gene>
<proteinExistence type="inferred from homology"/>
<reference key="1">
    <citation type="journal article" date="2007" name="ISME J.">
        <title>Population level functional diversity in a microbial community revealed by comparative genomic and metagenomic analyses.</title>
        <authorList>
            <person name="Bhaya D."/>
            <person name="Grossman A.R."/>
            <person name="Steunou A.-S."/>
            <person name="Khuri N."/>
            <person name="Cohan F.M."/>
            <person name="Hamamura N."/>
            <person name="Melendrez M.C."/>
            <person name="Bateson M.M."/>
            <person name="Ward D.M."/>
            <person name="Heidelberg J.F."/>
        </authorList>
    </citation>
    <scope>NUCLEOTIDE SEQUENCE [LARGE SCALE GENOMIC DNA]</scope>
    <source>
        <strain>JA-3-3Ab</strain>
    </source>
</reference>
<evidence type="ECO:0000255" key="1">
    <source>
        <dbReference type="HAMAP-Rule" id="MF_00001"/>
    </source>
</evidence>
<comment type="function">
    <text evidence="1">Catalyzes the condensation of carbamoyl phosphate and aspartate to form carbamoyl aspartate and inorganic phosphate, the committed step in the de novo pyrimidine nucleotide biosynthesis pathway.</text>
</comment>
<comment type="catalytic activity">
    <reaction evidence="1">
        <text>carbamoyl phosphate + L-aspartate = N-carbamoyl-L-aspartate + phosphate + H(+)</text>
        <dbReference type="Rhea" id="RHEA:20013"/>
        <dbReference type="ChEBI" id="CHEBI:15378"/>
        <dbReference type="ChEBI" id="CHEBI:29991"/>
        <dbReference type="ChEBI" id="CHEBI:32814"/>
        <dbReference type="ChEBI" id="CHEBI:43474"/>
        <dbReference type="ChEBI" id="CHEBI:58228"/>
        <dbReference type="EC" id="2.1.3.2"/>
    </reaction>
</comment>
<comment type="pathway">
    <text evidence="1">Pyrimidine metabolism; UMP biosynthesis via de novo pathway; (S)-dihydroorotate from bicarbonate: step 2/3.</text>
</comment>
<comment type="subunit">
    <text evidence="1">Heterododecamer (2C3:3R2) of six catalytic PyrB chains organized as two trimers (C3), and six regulatory PyrI chains organized as three dimers (R2).</text>
</comment>
<comment type="similarity">
    <text evidence="1">Belongs to the aspartate/ornithine carbamoyltransferase superfamily. ATCase family.</text>
</comment>
<name>PYRB_SYNJA</name>
<dbReference type="EC" id="2.1.3.2" evidence="1"/>
<dbReference type="EMBL" id="CP000239">
    <property type="protein sequence ID" value="ABC99885.1"/>
    <property type="molecule type" value="Genomic_DNA"/>
</dbReference>
<dbReference type="RefSeq" id="WP_011430561.1">
    <property type="nucleotide sequence ID" value="NC_007775.1"/>
</dbReference>
<dbReference type="SMR" id="Q2JTU8"/>
<dbReference type="STRING" id="321327.CYA_1730"/>
<dbReference type="KEGG" id="cya:CYA_1730"/>
<dbReference type="eggNOG" id="COG0540">
    <property type="taxonomic scope" value="Bacteria"/>
</dbReference>
<dbReference type="HOGENOM" id="CLU_043846_2_0_3"/>
<dbReference type="OrthoDB" id="9774690at2"/>
<dbReference type="UniPathway" id="UPA00070">
    <property type="reaction ID" value="UER00116"/>
</dbReference>
<dbReference type="Proteomes" id="UP000008818">
    <property type="component" value="Chromosome"/>
</dbReference>
<dbReference type="GO" id="GO:0005829">
    <property type="term" value="C:cytosol"/>
    <property type="evidence" value="ECO:0007669"/>
    <property type="project" value="TreeGrafter"/>
</dbReference>
<dbReference type="GO" id="GO:0016597">
    <property type="term" value="F:amino acid binding"/>
    <property type="evidence" value="ECO:0007669"/>
    <property type="project" value="InterPro"/>
</dbReference>
<dbReference type="GO" id="GO:0004070">
    <property type="term" value="F:aspartate carbamoyltransferase activity"/>
    <property type="evidence" value="ECO:0007669"/>
    <property type="project" value="UniProtKB-UniRule"/>
</dbReference>
<dbReference type="GO" id="GO:0006207">
    <property type="term" value="P:'de novo' pyrimidine nucleobase biosynthetic process"/>
    <property type="evidence" value="ECO:0007669"/>
    <property type="project" value="InterPro"/>
</dbReference>
<dbReference type="GO" id="GO:0044205">
    <property type="term" value="P:'de novo' UMP biosynthetic process"/>
    <property type="evidence" value="ECO:0007669"/>
    <property type="project" value="UniProtKB-UniRule"/>
</dbReference>
<dbReference type="GO" id="GO:0006520">
    <property type="term" value="P:amino acid metabolic process"/>
    <property type="evidence" value="ECO:0007669"/>
    <property type="project" value="InterPro"/>
</dbReference>
<dbReference type="Gene3D" id="3.40.50.1370">
    <property type="entry name" value="Aspartate/ornithine carbamoyltransferase"/>
    <property type="match status" value="2"/>
</dbReference>
<dbReference type="HAMAP" id="MF_00001">
    <property type="entry name" value="Asp_carb_tr"/>
    <property type="match status" value="1"/>
</dbReference>
<dbReference type="InterPro" id="IPR006132">
    <property type="entry name" value="Asp/Orn_carbamoyltranf_P-bd"/>
</dbReference>
<dbReference type="InterPro" id="IPR006130">
    <property type="entry name" value="Asp/Orn_carbamoylTrfase"/>
</dbReference>
<dbReference type="InterPro" id="IPR036901">
    <property type="entry name" value="Asp/Orn_carbamoylTrfase_sf"/>
</dbReference>
<dbReference type="InterPro" id="IPR002082">
    <property type="entry name" value="Asp_carbamoyltransf"/>
</dbReference>
<dbReference type="InterPro" id="IPR006131">
    <property type="entry name" value="Asp_carbamoyltransf_Asp/Orn-bd"/>
</dbReference>
<dbReference type="NCBIfam" id="TIGR00670">
    <property type="entry name" value="asp_carb_tr"/>
    <property type="match status" value="1"/>
</dbReference>
<dbReference type="NCBIfam" id="NF002032">
    <property type="entry name" value="PRK00856.1"/>
    <property type="match status" value="1"/>
</dbReference>
<dbReference type="PANTHER" id="PTHR45753:SF6">
    <property type="entry name" value="ASPARTATE CARBAMOYLTRANSFERASE"/>
    <property type="match status" value="1"/>
</dbReference>
<dbReference type="PANTHER" id="PTHR45753">
    <property type="entry name" value="ORNITHINE CARBAMOYLTRANSFERASE, MITOCHONDRIAL"/>
    <property type="match status" value="1"/>
</dbReference>
<dbReference type="Pfam" id="PF00185">
    <property type="entry name" value="OTCace"/>
    <property type="match status" value="1"/>
</dbReference>
<dbReference type="Pfam" id="PF02729">
    <property type="entry name" value="OTCace_N"/>
    <property type="match status" value="1"/>
</dbReference>
<dbReference type="PRINTS" id="PR00100">
    <property type="entry name" value="AOTCASE"/>
</dbReference>
<dbReference type="PRINTS" id="PR00101">
    <property type="entry name" value="ATCASE"/>
</dbReference>
<dbReference type="SUPFAM" id="SSF53671">
    <property type="entry name" value="Aspartate/ornithine carbamoyltransferase"/>
    <property type="match status" value="1"/>
</dbReference>
<dbReference type="PROSITE" id="PS00097">
    <property type="entry name" value="CARBAMOYLTRANSFERASE"/>
    <property type="match status" value="1"/>
</dbReference>
<protein>
    <recommendedName>
        <fullName evidence="1">Aspartate carbamoyltransferase catalytic subunit</fullName>
        <ecNumber evidence="1">2.1.3.2</ecNumber>
    </recommendedName>
    <alternativeName>
        <fullName evidence="1">Aspartate transcarbamylase</fullName>
        <shortName evidence="1">ATCase</shortName>
    </alternativeName>
</protein>